<feature type="chain" id="PRO_0000353276" description="DNA-directed RNA polymerase subunit beta'">
    <location>
        <begin position="1"/>
        <end position="1423"/>
    </location>
</feature>
<feature type="binding site" evidence="1">
    <location>
        <position position="71"/>
    </location>
    <ligand>
        <name>Zn(2+)</name>
        <dbReference type="ChEBI" id="CHEBI:29105"/>
        <label>1</label>
    </ligand>
</feature>
<feature type="binding site" evidence="1">
    <location>
        <position position="73"/>
    </location>
    <ligand>
        <name>Zn(2+)</name>
        <dbReference type="ChEBI" id="CHEBI:29105"/>
        <label>1</label>
    </ligand>
</feature>
<feature type="binding site" evidence="1">
    <location>
        <position position="86"/>
    </location>
    <ligand>
        <name>Zn(2+)</name>
        <dbReference type="ChEBI" id="CHEBI:29105"/>
        <label>1</label>
    </ligand>
</feature>
<feature type="binding site" evidence="1">
    <location>
        <position position="89"/>
    </location>
    <ligand>
        <name>Zn(2+)</name>
        <dbReference type="ChEBI" id="CHEBI:29105"/>
        <label>1</label>
    </ligand>
</feature>
<feature type="binding site" evidence="1">
    <location>
        <position position="461"/>
    </location>
    <ligand>
        <name>Mg(2+)</name>
        <dbReference type="ChEBI" id="CHEBI:18420"/>
    </ligand>
</feature>
<feature type="binding site" evidence="1">
    <location>
        <position position="463"/>
    </location>
    <ligand>
        <name>Mg(2+)</name>
        <dbReference type="ChEBI" id="CHEBI:18420"/>
    </ligand>
</feature>
<feature type="binding site" evidence="1">
    <location>
        <position position="465"/>
    </location>
    <ligand>
        <name>Mg(2+)</name>
        <dbReference type="ChEBI" id="CHEBI:18420"/>
    </ligand>
</feature>
<feature type="binding site" evidence="1">
    <location>
        <position position="815"/>
    </location>
    <ligand>
        <name>Zn(2+)</name>
        <dbReference type="ChEBI" id="CHEBI:29105"/>
        <label>2</label>
    </ligand>
</feature>
<feature type="binding site" evidence="1">
    <location>
        <position position="889"/>
    </location>
    <ligand>
        <name>Zn(2+)</name>
        <dbReference type="ChEBI" id="CHEBI:29105"/>
        <label>2</label>
    </ligand>
</feature>
<feature type="binding site" evidence="1">
    <location>
        <position position="896"/>
    </location>
    <ligand>
        <name>Zn(2+)</name>
        <dbReference type="ChEBI" id="CHEBI:29105"/>
        <label>2</label>
    </ligand>
</feature>
<feature type="binding site" evidence="1">
    <location>
        <position position="899"/>
    </location>
    <ligand>
        <name>Zn(2+)</name>
        <dbReference type="ChEBI" id="CHEBI:29105"/>
        <label>2</label>
    </ligand>
</feature>
<comment type="function">
    <text evidence="1">DNA-dependent RNA polymerase catalyzes the transcription of DNA into RNA using the four ribonucleoside triphosphates as substrates.</text>
</comment>
<comment type="catalytic activity">
    <reaction evidence="1">
        <text>RNA(n) + a ribonucleoside 5'-triphosphate = RNA(n+1) + diphosphate</text>
        <dbReference type="Rhea" id="RHEA:21248"/>
        <dbReference type="Rhea" id="RHEA-COMP:14527"/>
        <dbReference type="Rhea" id="RHEA-COMP:17342"/>
        <dbReference type="ChEBI" id="CHEBI:33019"/>
        <dbReference type="ChEBI" id="CHEBI:61557"/>
        <dbReference type="ChEBI" id="CHEBI:140395"/>
        <dbReference type="EC" id="2.7.7.6"/>
    </reaction>
</comment>
<comment type="cofactor">
    <cofactor evidence="1">
        <name>Mg(2+)</name>
        <dbReference type="ChEBI" id="CHEBI:18420"/>
    </cofactor>
    <text evidence="1">Binds 1 Mg(2+) ion per subunit.</text>
</comment>
<comment type="cofactor">
    <cofactor evidence="1">
        <name>Zn(2+)</name>
        <dbReference type="ChEBI" id="CHEBI:29105"/>
    </cofactor>
    <text evidence="1">Binds 2 Zn(2+) ions per subunit.</text>
</comment>
<comment type="subunit">
    <text evidence="1">The RNAP catalytic core consists of 2 alpha, 1 beta, 1 beta' and 1 omega subunit. When a sigma factor is associated with the core the holoenzyme is formed, which can initiate transcription.</text>
</comment>
<comment type="similarity">
    <text evidence="1">Belongs to the RNA polymerase beta' chain family.</text>
</comment>
<dbReference type="EC" id="2.7.7.6" evidence="1"/>
<dbReference type="EMBL" id="CP000687">
    <property type="protein sequence ID" value="ABY70313.1"/>
    <property type="molecule type" value="Genomic_DNA"/>
</dbReference>
<dbReference type="RefSeq" id="WP_012263370.1">
    <property type="nucleotide sequence ID" value="NC_010278.1"/>
</dbReference>
<dbReference type="SMR" id="B0BSF6"/>
<dbReference type="KEGG" id="apj:APJL_1763"/>
<dbReference type="HOGENOM" id="CLU_000524_3_1_6"/>
<dbReference type="Proteomes" id="UP000008547">
    <property type="component" value="Chromosome"/>
</dbReference>
<dbReference type="GO" id="GO:0000428">
    <property type="term" value="C:DNA-directed RNA polymerase complex"/>
    <property type="evidence" value="ECO:0007669"/>
    <property type="project" value="UniProtKB-KW"/>
</dbReference>
<dbReference type="GO" id="GO:0003677">
    <property type="term" value="F:DNA binding"/>
    <property type="evidence" value="ECO:0007669"/>
    <property type="project" value="UniProtKB-UniRule"/>
</dbReference>
<dbReference type="GO" id="GO:0003899">
    <property type="term" value="F:DNA-directed RNA polymerase activity"/>
    <property type="evidence" value="ECO:0007669"/>
    <property type="project" value="UniProtKB-UniRule"/>
</dbReference>
<dbReference type="GO" id="GO:0000287">
    <property type="term" value="F:magnesium ion binding"/>
    <property type="evidence" value="ECO:0007669"/>
    <property type="project" value="UniProtKB-UniRule"/>
</dbReference>
<dbReference type="GO" id="GO:0008270">
    <property type="term" value="F:zinc ion binding"/>
    <property type="evidence" value="ECO:0007669"/>
    <property type="project" value="UniProtKB-UniRule"/>
</dbReference>
<dbReference type="GO" id="GO:0006351">
    <property type="term" value="P:DNA-templated transcription"/>
    <property type="evidence" value="ECO:0007669"/>
    <property type="project" value="UniProtKB-UniRule"/>
</dbReference>
<dbReference type="CDD" id="cd02655">
    <property type="entry name" value="RNAP_beta'_C"/>
    <property type="match status" value="1"/>
</dbReference>
<dbReference type="CDD" id="cd01609">
    <property type="entry name" value="RNAP_beta'_N"/>
    <property type="match status" value="1"/>
</dbReference>
<dbReference type="FunFam" id="1.10.132.30:FF:000003">
    <property type="entry name" value="DNA-directed RNA polymerase subunit beta"/>
    <property type="match status" value="1"/>
</dbReference>
<dbReference type="FunFam" id="1.10.150.390:FF:000002">
    <property type="entry name" value="DNA-directed RNA polymerase subunit beta"/>
    <property type="match status" value="1"/>
</dbReference>
<dbReference type="FunFam" id="4.10.860.120:FF:000001">
    <property type="entry name" value="DNA-directed RNA polymerase subunit beta"/>
    <property type="match status" value="1"/>
</dbReference>
<dbReference type="Gene3D" id="1.10.132.30">
    <property type="match status" value="1"/>
</dbReference>
<dbReference type="Gene3D" id="1.10.150.390">
    <property type="match status" value="1"/>
</dbReference>
<dbReference type="Gene3D" id="1.10.1790.20">
    <property type="match status" value="1"/>
</dbReference>
<dbReference type="Gene3D" id="1.10.40.90">
    <property type="match status" value="1"/>
</dbReference>
<dbReference type="Gene3D" id="2.40.40.20">
    <property type="match status" value="1"/>
</dbReference>
<dbReference type="Gene3D" id="2.40.50.100">
    <property type="match status" value="3"/>
</dbReference>
<dbReference type="Gene3D" id="4.10.860.120">
    <property type="entry name" value="RNA polymerase II, clamp domain"/>
    <property type="match status" value="1"/>
</dbReference>
<dbReference type="Gene3D" id="1.10.274.100">
    <property type="entry name" value="RNA polymerase Rpb1, domain 3"/>
    <property type="match status" value="1"/>
</dbReference>
<dbReference type="HAMAP" id="MF_01322">
    <property type="entry name" value="RNApol_bact_RpoC"/>
    <property type="match status" value="1"/>
</dbReference>
<dbReference type="InterPro" id="IPR045867">
    <property type="entry name" value="DNA-dir_RpoC_beta_prime"/>
</dbReference>
<dbReference type="InterPro" id="IPR012754">
    <property type="entry name" value="DNA-dir_RpoC_beta_prime_bact"/>
</dbReference>
<dbReference type="InterPro" id="IPR000722">
    <property type="entry name" value="RNA_pol_asu"/>
</dbReference>
<dbReference type="InterPro" id="IPR006592">
    <property type="entry name" value="RNA_pol_N"/>
</dbReference>
<dbReference type="InterPro" id="IPR007080">
    <property type="entry name" value="RNA_pol_Rpb1_1"/>
</dbReference>
<dbReference type="InterPro" id="IPR007066">
    <property type="entry name" value="RNA_pol_Rpb1_3"/>
</dbReference>
<dbReference type="InterPro" id="IPR042102">
    <property type="entry name" value="RNA_pol_Rpb1_3_sf"/>
</dbReference>
<dbReference type="InterPro" id="IPR007083">
    <property type="entry name" value="RNA_pol_Rpb1_4"/>
</dbReference>
<dbReference type="InterPro" id="IPR007081">
    <property type="entry name" value="RNA_pol_Rpb1_5"/>
</dbReference>
<dbReference type="InterPro" id="IPR044893">
    <property type="entry name" value="RNA_pol_Rpb1_clamp_domain"/>
</dbReference>
<dbReference type="InterPro" id="IPR038120">
    <property type="entry name" value="Rpb1_funnel_sf"/>
</dbReference>
<dbReference type="NCBIfam" id="TIGR02386">
    <property type="entry name" value="rpoC_TIGR"/>
    <property type="match status" value="1"/>
</dbReference>
<dbReference type="PANTHER" id="PTHR19376">
    <property type="entry name" value="DNA-DIRECTED RNA POLYMERASE"/>
    <property type="match status" value="1"/>
</dbReference>
<dbReference type="PANTHER" id="PTHR19376:SF54">
    <property type="entry name" value="DNA-DIRECTED RNA POLYMERASE SUBUNIT BETA"/>
    <property type="match status" value="1"/>
</dbReference>
<dbReference type="Pfam" id="PF04997">
    <property type="entry name" value="RNA_pol_Rpb1_1"/>
    <property type="match status" value="1"/>
</dbReference>
<dbReference type="Pfam" id="PF00623">
    <property type="entry name" value="RNA_pol_Rpb1_2"/>
    <property type="match status" value="2"/>
</dbReference>
<dbReference type="Pfam" id="PF04983">
    <property type="entry name" value="RNA_pol_Rpb1_3"/>
    <property type="match status" value="1"/>
</dbReference>
<dbReference type="Pfam" id="PF05000">
    <property type="entry name" value="RNA_pol_Rpb1_4"/>
    <property type="match status" value="1"/>
</dbReference>
<dbReference type="Pfam" id="PF04998">
    <property type="entry name" value="RNA_pol_Rpb1_5"/>
    <property type="match status" value="1"/>
</dbReference>
<dbReference type="SMART" id="SM00663">
    <property type="entry name" value="RPOLA_N"/>
    <property type="match status" value="1"/>
</dbReference>
<dbReference type="SUPFAM" id="SSF64484">
    <property type="entry name" value="beta and beta-prime subunits of DNA dependent RNA-polymerase"/>
    <property type="match status" value="1"/>
</dbReference>
<proteinExistence type="inferred from homology"/>
<evidence type="ECO:0000255" key="1">
    <source>
        <dbReference type="HAMAP-Rule" id="MF_01322"/>
    </source>
</evidence>
<protein>
    <recommendedName>
        <fullName evidence="1">DNA-directed RNA polymerase subunit beta'</fullName>
        <shortName evidence="1">RNAP subunit beta'</shortName>
        <ecNumber evidence="1">2.7.7.6</ecNumber>
    </recommendedName>
    <alternativeName>
        <fullName evidence="1">RNA polymerase subunit beta'</fullName>
    </alternativeName>
    <alternativeName>
        <fullName evidence="1">Transcriptase subunit beta'</fullName>
    </alternativeName>
</protein>
<gene>
    <name evidence="1" type="primary">rpoC</name>
    <name type="ordered locus">APJL_1763</name>
</gene>
<accession>B0BSF6</accession>
<organism>
    <name type="scientific">Actinobacillus pleuropneumoniae serotype 3 (strain JL03)</name>
    <dbReference type="NCBI Taxonomy" id="434271"/>
    <lineage>
        <taxon>Bacteria</taxon>
        <taxon>Pseudomonadati</taxon>
        <taxon>Pseudomonadota</taxon>
        <taxon>Gammaproteobacteria</taxon>
        <taxon>Pasteurellales</taxon>
        <taxon>Pasteurellaceae</taxon>
        <taxon>Actinobacillus</taxon>
    </lineage>
</organism>
<name>RPOC_ACTPJ</name>
<keyword id="KW-0240">DNA-directed RNA polymerase</keyword>
<keyword id="KW-0460">Magnesium</keyword>
<keyword id="KW-0479">Metal-binding</keyword>
<keyword id="KW-0548">Nucleotidyltransferase</keyword>
<keyword id="KW-0804">Transcription</keyword>
<keyword id="KW-0808">Transferase</keyword>
<keyword id="KW-0862">Zinc</keyword>
<reference key="1">
    <citation type="journal article" date="2008" name="PLoS ONE">
        <title>Genome biology of Actinobacillus pleuropneumoniae JL03, an isolate of serotype 3 prevalent in China.</title>
        <authorList>
            <person name="Xu Z."/>
            <person name="Zhou Y."/>
            <person name="Li L."/>
            <person name="Zhou R."/>
            <person name="Xiao S."/>
            <person name="Wan Y."/>
            <person name="Zhang S."/>
            <person name="Wang K."/>
            <person name="Li W."/>
            <person name="Li L."/>
            <person name="Jin H."/>
            <person name="Kang M."/>
            <person name="Dalai B."/>
            <person name="Li T."/>
            <person name="Liu L."/>
            <person name="Cheng Y."/>
            <person name="Zhang L."/>
            <person name="Xu T."/>
            <person name="Zheng H."/>
            <person name="Pu S."/>
            <person name="Wang B."/>
            <person name="Gu W."/>
            <person name="Zhang X.L."/>
            <person name="Zhu G.-F."/>
            <person name="Wang S."/>
            <person name="Zhao G.-P."/>
            <person name="Chen H."/>
        </authorList>
    </citation>
    <scope>NUCLEOTIDE SEQUENCE [LARGE SCALE GENOMIC DNA]</scope>
    <source>
        <strain>JL03</strain>
    </source>
</reference>
<sequence length="1423" mass="157529">MKDLVKFLKAQSKSNDDFDVIKIGLASPDKIRSWSFGEVKKPETINYRTFKPERDGLFCARIFGPVKDYECLCGKYKRLKHRGVICEKCGVEVTQTKVRRDRMGHIELACPVAHIWFLKSLPSRIGLILDMPLRDIERVLYFESYVVTEPGMTDLEKNQLLTEEQFLDAEERWGDEFEAKMGAEGIQALLRDMDLEHQCEMMREELQETNSETKRKKITKRLKLLEAFQQSGNKPEWMVMTVLPVLPPDLRPLVPLDGGRFATSDLNDLYRRVINRNNRLKRLLDLVAPDIIVRNEKRMLQKSVDALLDNGRRGRAITGSNKRPLKSLADMIKGKQGRFRQNLLGKRVDYSGRSVITVGPYLHLHQCGLPKKMALELFRPFIYSKLESRGIASTIKAAKKMVEREEPIVWDILAEVIREHPILLNRAPTLHRLGIQAFEPILIEGKAIQLHPLVCAAFNADFDGDQMAVHVPLTLEAQLEARALMMSTNNVLSPASGDPIIVPSQDVVLGLYYMTREKVNAKGEGMYFLDPREAEKAYRTGQAELHARVKVRITEHVKNEAGELVAETKLLDTTIGRAILWMIAPKGMPFKVFNQTLGKKAISKLINESYRRLGLKESVILADQIMYTGFAYAARSGASVGIDDMVIPAQKHEIIRAAEAEVAEIQEQFNSGLVTAGERYNKVIDIWAAANERVAKAMMENLSTEEVINREGNPEKQASFNSIFMMADSGARGSAAQIRQLAGMRGLMARPDGSIIETPITANFREGLNVLQYFISTHGARKGLADTALKTANSGYLTRRLVDVAQDLVITEDDCGTHEGIVMTPLIEGGDVKEALRDRVLGRVVAEDVLKPGTEEVLIPRNTLIDEKWCDVIDAESVDVIKVRSVVTCNTDFGVCAKCYGRDLARGHLINQGEAVGVIAAQSIGEPGTQLTMRTFHIGGAASAAAKESSIQVKNAGTIKLTNAKFVTNKEGKIVLTSRNTELTVIDTFGRTKENYKVPYGAVLSKNDGAEVAVGEVVANWDPHTMPVISEVSGRIQFSDIVDGLTVTRQTDELTGLSSIVVQDVGERATAGKDLRPALRLVDAQGNDILIPGTDVAAQYFLPGKAIVTLDDGAEIEVGEALARIPQESVGTKDITGGLPRVADLFEARKPKEPAILAEISGIVSFGKETKGKRRLVITPAEGEAFEEMIPKWRQLNVFEGEMVQRGDVISDGAETPHDILRLRGVHAVTDYIVNEVQEVYRLQGVKINDKHIEVIVRQMLRKAVITNAYDSEFLEGEQVEVSRVKIANRKRAEEGKPLVEFERELLGITKASLATESFISAASFQETTRVLTEAAVAGKRDELRGLKENVIVGRLIPAGTGFAYHQARAKKRSQPEQAVAFEAPVAKANGFATDADIEAEFEFVADDATQSLAALLNAGDEE</sequence>